<keyword id="KW-0687">Ribonucleoprotein</keyword>
<keyword id="KW-0689">Ribosomal protein</keyword>
<keyword id="KW-0694">RNA-binding</keyword>
<keyword id="KW-0699">rRNA-binding</keyword>
<feature type="chain" id="PRO_1000143266" description="Small ribosomal subunit protein uS17">
    <location>
        <begin position="1"/>
        <end position="86"/>
    </location>
</feature>
<reference key="1">
    <citation type="submission" date="2008-05" db="EMBL/GenBank/DDBJ databases">
        <title>Genome sequence of Helicobacter pylori from the remote Amazon: traces of Asian ancestry of the first Americans.</title>
        <authorList>
            <person name="Kersulyte D."/>
            <person name="Kalia A."/>
            <person name="Gilman R.H."/>
            <person name="Berg D.E."/>
        </authorList>
    </citation>
    <scope>NUCLEOTIDE SEQUENCE [LARGE SCALE GENOMIC DNA]</scope>
    <source>
        <strain>Shi470</strain>
    </source>
</reference>
<organism>
    <name type="scientific">Helicobacter pylori (strain Shi470)</name>
    <dbReference type="NCBI Taxonomy" id="512562"/>
    <lineage>
        <taxon>Bacteria</taxon>
        <taxon>Pseudomonadati</taxon>
        <taxon>Campylobacterota</taxon>
        <taxon>Epsilonproteobacteria</taxon>
        <taxon>Campylobacterales</taxon>
        <taxon>Helicobacteraceae</taxon>
        <taxon>Helicobacter</taxon>
    </lineage>
</organism>
<comment type="function">
    <text evidence="1">One of the primary rRNA binding proteins, it binds specifically to the 5'-end of 16S ribosomal RNA.</text>
</comment>
<comment type="subunit">
    <text evidence="1">Part of the 30S ribosomal subunit.</text>
</comment>
<comment type="similarity">
    <text evidence="1">Belongs to the universal ribosomal protein uS17 family.</text>
</comment>
<accession>B2UV73</accession>
<gene>
    <name evidence="1" type="primary">rpsQ</name>
    <name type="ordered locus">HPSH_06775</name>
</gene>
<dbReference type="EMBL" id="CP001072">
    <property type="protein sequence ID" value="ACD48755.1"/>
    <property type="molecule type" value="Genomic_DNA"/>
</dbReference>
<dbReference type="RefSeq" id="WP_001092746.1">
    <property type="nucleotide sequence ID" value="NC_010698.2"/>
</dbReference>
<dbReference type="SMR" id="B2UV73"/>
<dbReference type="KEGG" id="hps:HPSH_06775"/>
<dbReference type="HOGENOM" id="CLU_073626_1_1_7"/>
<dbReference type="GO" id="GO:0022627">
    <property type="term" value="C:cytosolic small ribosomal subunit"/>
    <property type="evidence" value="ECO:0007669"/>
    <property type="project" value="TreeGrafter"/>
</dbReference>
<dbReference type="GO" id="GO:0019843">
    <property type="term" value="F:rRNA binding"/>
    <property type="evidence" value="ECO:0007669"/>
    <property type="project" value="UniProtKB-UniRule"/>
</dbReference>
<dbReference type="GO" id="GO:0003735">
    <property type="term" value="F:structural constituent of ribosome"/>
    <property type="evidence" value="ECO:0007669"/>
    <property type="project" value="InterPro"/>
</dbReference>
<dbReference type="GO" id="GO:0006412">
    <property type="term" value="P:translation"/>
    <property type="evidence" value="ECO:0007669"/>
    <property type="project" value="UniProtKB-UniRule"/>
</dbReference>
<dbReference type="CDD" id="cd00364">
    <property type="entry name" value="Ribosomal_uS17"/>
    <property type="match status" value="1"/>
</dbReference>
<dbReference type="FunFam" id="2.40.50.140:FF:000108">
    <property type="entry name" value="30S ribosomal protein S17"/>
    <property type="match status" value="1"/>
</dbReference>
<dbReference type="Gene3D" id="2.40.50.140">
    <property type="entry name" value="Nucleic acid-binding proteins"/>
    <property type="match status" value="1"/>
</dbReference>
<dbReference type="HAMAP" id="MF_01345_B">
    <property type="entry name" value="Ribosomal_uS17_B"/>
    <property type="match status" value="1"/>
</dbReference>
<dbReference type="InterPro" id="IPR012340">
    <property type="entry name" value="NA-bd_OB-fold"/>
</dbReference>
<dbReference type="InterPro" id="IPR000266">
    <property type="entry name" value="Ribosomal_uS17"/>
</dbReference>
<dbReference type="InterPro" id="IPR019984">
    <property type="entry name" value="Ribosomal_uS17_bact/chlr"/>
</dbReference>
<dbReference type="InterPro" id="IPR019979">
    <property type="entry name" value="Ribosomal_uS17_CS"/>
</dbReference>
<dbReference type="NCBIfam" id="NF004123">
    <property type="entry name" value="PRK05610.1"/>
    <property type="match status" value="1"/>
</dbReference>
<dbReference type="NCBIfam" id="TIGR03635">
    <property type="entry name" value="uS17_bact"/>
    <property type="match status" value="1"/>
</dbReference>
<dbReference type="PANTHER" id="PTHR10744">
    <property type="entry name" value="40S RIBOSOMAL PROTEIN S11 FAMILY MEMBER"/>
    <property type="match status" value="1"/>
</dbReference>
<dbReference type="PANTHER" id="PTHR10744:SF1">
    <property type="entry name" value="SMALL RIBOSOMAL SUBUNIT PROTEIN US17M"/>
    <property type="match status" value="1"/>
</dbReference>
<dbReference type="Pfam" id="PF00366">
    <property type="entry name" value="Ribosomal_S17"/>
    <property type="match status" value="1"/>
</dbReference>
<dbReference type="PRINTS" id="PR00973">
    <property type="entry name" value="RIBOSOMALS17"/>
</dbReference>
<dbReference type="SUPFAM" id="SSF50249">
    <property type="entry name" value="Nucleic acid-binding proteins"/>
    <property type="match status" value="1"/>
</dbReference>
<dbReference type="PROSITE" id="PS00056">
    <property type="entry name" value="RIBOSOMAL_S17"/>
    <property type="match status" value="1"/>
</dbReference>
<evidence type="ECO:0000255" key="1">
    <source>
        <dbReference type="HAMAP-Rule" id="MF_01345"/>
    </source>
</evidence>
<evidence type="ECO:0000305" key="2"/>
<proteinExistence type="inferred from homology"/>
<sequence length="86" mass="9939">MNTKEPHKRLVQGKVISKFAEKSAVILVERKVVHEKYRKIVKKFKKYTIHDENNQVKVGDFVSAIECRPLSKTKSFTLKEILVVGV</sequence>
<protein>
    <recommendedName>
        <fullName evidence="1">Small ribosomal subunit protein uS17</fullName>
    </recommendedName>
    <alternativeName>
        <fullName evidence="2">30S ribosomal protein S17</fullName>
    </alternativeName>
</protein>
<name>RS17_HELPS</name>